<feature type="chain" id="PRO_0000213219" description="Global transcriptional regulator CodY">
    <location>
        <begin position="1"/>
        <end position="259"/>
    </location>
</feature>
<feature type="DNA-binding region" description="H-T-H motif" evidence="1">
    <location>
        <begin position="203"/>
        <end position="222"/>
    </location>
</feature>
<feature type="region of interest" description="GAF domain" evidence="1">
    <location>
        <begin position="1"/>
        <end position="155"/>
    </location>
</feature>
<feature type="modified residue" description="Phosphoserine" evidence="1">
    <location>
        <position position="215"/>
    </location>
</feature>
<name>CODY_BACLD</name>
<comment type="function">
    <text evidence="1">DNA-binding global transcriptional regulator which is involved in the adaptive response to starvation and acts by directly or indirectly controlling the expression of numerous genes in response to nutrient availability. During rapid exponential growth, CodY is highly active and represses genes whose products allow adaptation to nutrient depletion.</text>
</comment>
<comment type="subcellular location">
    <subcellularLocation>
        <location evidence="1">Cytoplasm</location>
    </subcellularLocation>
</comment>
<comment type="similarity">
    <text evidence="1">Belongs to the CodY family.</text>
</comment>
<evidence type="ECO:0000255" key="1">
    <source>
        <dbReference type="HAMAP-Rule" id="MF_00621"/>
    </source>
</evidence>
<protein>
    <recommendedName>
        <fullName evidence="1">Global transcriptional regulator CodY</fullName>
    </recommendedName>
</protein>
<reference key="1">
    <citation type="journal article" date="2004" name="J. Mol. Microbiol. Biotechnol.">
        <title>The complete genome sequence of Bacillus licheniformis DSM13, an organism with great industrial potential.</title>
        <authorList>
            <person name="Veith B."/>
            <person name="Herzberg C."/>
            <person name="Steckel S."/>
            <person name="Feesche J."/>
            <person name="Maurer K.H."/>
            <person name="Ehrenreich P."/>
            <person name="Baeumer S."/>
            <person name="Henne A."/>
            <person name="Liesegang H."/>
            <person name="Merkl R."/>
            <person name="Ehrenreich A."/>
            <person name="Gottschalk G."/>
        </authorList>
    </citation>
    <scope>NUCLEOTIDE SEQUENCE [LARGE SCALE GENOMIC DNA]</scope>
    <source>
        <strain>ATCC 14580 / DSM 13 / JCM 2505 / CCUG 7422 / NBRC 12200 / NCIMB 9375 / NCTC 10341 / NRRL NRS-1264 / Gibson 46</strain>
    </source>
</reference>
<reference key="2">
    <citation type="journal article" date="2004" name="Genome Biol.">
        <title>Complete genome sequence of the industrial bacterium Bacillus licheniformis and comparisons with closely related Bacillus species.</title>
        <authorList>
            <person name="Rey M.W."/>
            <person name="Ramaiya P."/>
            <person name="Nelson B.A."/>
            <person name="Brody-Karpin S.D."/>
            <person name="Zaretsky E.J."/>
            <person name="Tang M."/>
            <person name="Lopez de Leon A."/>
            <person name="Xiang H."/>
            <person name="Gusti V."/>
            <person name="Clausen I.G."/>
            <person name="Olsen P.B."/>
            <person name="Rasmussen M.D."/>
            <person name="Andersen J.T."/>
            <person name="Joergensen P.L."/>
            <person name="Larsen T.S."/>
            <person name="Sorokin A."/>
            <person name="Bolotin A."/>
            <person name="Lapidus A."/>
            <person name="Galleron N."/>
            <person name="Ehrlich S.D."/>
            <person name="Berka R.M."/>
        </authorList>
    </citation>
    <scope>NUCLEOTIDE SEQUENCE [LARGE SCALE GENOMIC DNA]</scope>
    <source>
        <strain>ATCC 14580 / DSM 13 / JCM 2505 / CCUG 7422 / NBRC 12200 / NCIMB 9375 / NCTC 10341 / NRRL NRS-1264 / Gibson 46</strain>
    </source>
</reference>
<organism>
    <name type="scientific">Bacillus licheniformis (strain ATCC 14580 / DSM 13 / JCM 2505 / CCUG 7422 / NBRC 12200 / NCIMB 9375 / NCTC 10341 / NRRL NRS-1264 / Gibson 46)</name>
    <dbReference type="NCBI Taxonomy" id="279010"/>
    <lineage>
        <taxon>Bacteria</taxon>
        <taxon>Bacillati</taxon>
        <taxon>Bacillota</taxon>
        <taxon>Bacilli</taxon>
        <taxon>Bacillales</taxon>
        <taxon>Bacillaceae</taxon>
        <taxon>Bacillus</taxon>
    </lineage>
</organism>
<accession>Q65JN2</accession>
<accession>Q62V37</accession>
<gene>
    <name evidence="1" type="primary">codY</name>
    <name type="ordered locus">BLi01837</name>
    <name type="ordered locus">BL01276</name>
</gene>
<proteinExistence type="inferred from homology"/>
<dbReference type="EMBL" id="AE017333">
    <property type="protein sequence ID" value="AAU40732.1"/>
    <property type="molecule type" value="Genomic_DNA"/>
</dbReference>
<dbReference type="EMBL" id="CP000002">
    <property type="protein sequence ID" value="AAU23372.1"/>
    <property type="molecule type" value="Genomic_DNA"/>
</dbReference>
<dbReference type="RefSeq" id="WP_003181756.1">
    <property type="nucleotide sequence ID" value="NC_006322.1"/>
</dbReference>
<dbReference type="SMR" id="Q65JN2"/>
<dbReference type="STRING" id="279010.BL01276"/>
<dbReference type="GeneID" id="92861570"/>
<dbReference type="KEGG" id="bld:BLi01837"/>
<dbReference type="KEGG" id="bli:BL01276"/>
<dbReference type="eggNOG" id="COG4465">
    <property type="taxonomic scope" value="Bacteria"/>
</dbReference>
<dbReference type="HOGENOM" id="CLU_089581_0_0_9"/>
<dbReference type="Proteomes" id="UP000000606">
    <property type="component" value="Chromosome"/>
</dbReference>
<dbReference type="GO" id="GO:0005737">
    <property type="term" value="C:cytoplasm"/>
    <property type="evidence" value="ECO:0007669"/>
    <property type="project" value="UniProtKB-SubCell"/>
</dbReference>
<dbReference type="GO" id="GO:0003677">
    <property type="term" value="F:DNA binding"/>
    <property type="evidence" value="ECO:0007669"/>
    <property type="project" value="UniProtKB-UniRule"/>
</dbReference>
<dbReference type="GO" id="GO:0003700">
    <property type="term" value="F:DNA-binding transcription factor activity"/>
    <property type="evidence" value="ECO:0007669"/>
    <property type="project" value="InterPro"/>
</dbReference>
<dbReference type="GO" id="GO:0005525">
    <property type="term" value="F:GTP binding"/>
    <property type="evidence" value="ECO:0007669"/>
    <property type="project" value="InterPro"/>
</dbReference>
<dbReference type="GO" id="GO:0045892">
    <property type="term" value="P:negative regulation of DNA-templated transcription"/>
    <property type="evidence" value="ECO:0007669"/>
    <property type="project" value="UniProtKB-UniRule"/>
</dbReference>
<dbReference type="FunFam" id="1.10.10.10:FF:000034">
    <property type="entry name" value="GTP-sensing transcriptional pleiotropic repressor CodY"/>
    <property type="match status" value="1"/>
</dbReference>
<dbReference type="FunFam" id="3.30.450.40:FF:000003">
    <property type="entry name" value="GTP-sensing transcriptional pleiotropic repressor CodY"/>
    <property type="match status" value="1"/>
</dbReference>
<dbReference type="Gene3D" id="3.30.450.40">
    <property type="match status" value="1"/>
</dbReference>
<dbReference type="Gene3D" id="1.10.10.10">
    <property type="entry name" value="Winged helix-like DNA-binding domain superfamily/Winged helix DNA-binding domain"/>
    <property type="match status" value="1"/>
</dbReference>
<dbReference type="HAMAP" id="MF_00621">
    <property type="entry name" value="HTH_type_CodY"/>
    <property type="match status" value="1"/>
</dbReference>
<dbReference type="InterPro" id="IPR014154">
    <property type="entry name" value="CodY"/>
</dbReference>
<dbReference type="InterPro" id="IPR029016">
    <property type="entry name" value="GAF-like_dom_sf"/>
</dbReference>
<dbReference type="InterPro" id="IPR013198">
    <property type="entry name" value="GTP_trans_reg_CodY_C"/>
</dbReference>
<dbReference type="InterPro" id="IPR010312">
    <property type="entry name" value="Transc_reg_CodY_N"/>
</dbReference>
<dbReference type="InterPro" id="IPR036388">
    <property type="entry name" value="WH-like_DNA-bd_sf"/>
</dbReference>
<dbReference type="InterPro" id="IPR036390">
    <property type="entry name" value="WH_DNA-bd_sf"/>
</dbReference>
<dbReference type="NCBIfam" id="TIGR02787">
    <property type="entry name" value="codY_Gpos"/>
    <property type="match status" value="1"/>
</dbReference>
<dbReference type="NCBIfam" id="NF003170">
    <property type="entry name" value="PRK04158.1"/>
    <property type="match status" value="1"/>
</dbReference>
<dbReference type="PANTHER" id="PTHR40062:SF1">
    <property type="entry name" value="GLOBAL TRANSCRIPTIONAL REGULATOR CODY"/>
    <property type="match status" value="1"/>
</dbReference>
<dbReference type="PANTHER" id="PTHR40062">
    <property type="entry name" value="GTP-SENSING TRANSCRIPTIONAL PLEIOTROPIC REPRESSOR CODY"/>
    <property type="match status" value="1"/>
</dbReference>
<dbReference type="Pfam" id="PF06018">
    <property type="entry name" value="CodY"/>
    <property type="match status" value="1"/>
</dbReference>
<dbReference type="Pfam" id="PF08222">
    <property type="entry name" value="HTH_CodY"/>
    <property type="match status" value="1"/>
</dbReference>
<dbReference type="PIRSF" id="PIRSF011572">
    <property type="entry name" value="GTP_sensing_CodY"/>
    <property type="match status" value="1"/>
</dbReference>
<dbReference type="SUPFAM" id="SSF46785">
    <property type="entry name" value="Winged helix' DNA-binding domain"/>
    <property type="match status" value="1"/>
</dbReference>
<keyword id="KW-0963">Cytoplasm</keyword>
<keyword id="KW-0238">DNA-binding</keyword>
<keyword id="KW-0597">Phosphoprotein</keyword>
<keyword id="KW-1185">Reference proteome</keyword>
<keyword id="KW-0678">Repressor</keyword>
<keyword id="KW-0804">Transcription</keyword>
<keyword id="KW-0805">Transcription regulation</keyword>
<sequence length="259" mass="29073">MALLQKTRKINAMLQNAAGKPVNFKEMAETLRDVIDSNIFVVSRRGKLLGFSINQQIENDRMKKMLEERQFPEDYTKSLFNIPETSSNLDINSEYTAFPVENRDLFQAGLTTVVPIIGGGERLGTLILSRLQEKFEDDDLILAEYGATVVGMEILREKAEEIEEEARSKAVVQMAISSLSYSELEAIEHIFEELDGNEGLLVASKIADRVGITRSVIVNALRKLESAGVIESRSLGMKGTYIKVLNNKFLMELEKLKSH</sequence>